<evidence type="ECO:0000255" key="1"/>
<evidence type="ECO:0000256" key="2">
    <source>
        <dbReference type="SAM" id="MobiDB-lite"/>
    </source>
</evidence>
<evidence type="ECO:0000269" key="3">
    <source>
    </source>
</evidence>
<evidence type="ECO:0000269" key="4">
    <source>
    </source>
</evidence>
<evidence type="ECO:0000269" key="5">
    <source>
    </source>
</evidence>
<evidence type="ECO:0000269" key="6">
    <source>
    </source>
</evidence>
<evidence type="ECO:0000305" key="7"/>
<evidence type="ECO:0000312" key="8">
    <source>
        <dbReference type="Proteomes" id="UP000001940"/>
    </source>
</evidence>
<evidence type="ECO:0000312" key="9">
    <source>
        <dbReference type="WormBase" id="Y23H5A.5d"/>
    </source>
</evidence>
<name>CTNL1_CAEEL</name>
<protein>
    <recommendedName>
        <fullName evidence="9">Alpha-catulin</fullName>
    </recommendedName>
</protein>
<organism evidence="8">
    <name type="scientific">Caenorhabditis elegans</name>
    <dbReference type="NCBI Taxonomy" id="6239"/>
    <lineage>
        <taxon>Eukaryota</taxon>
        <taxon>Metazoa</taxon>
        <taxon>Ecdysozoa</taxon>
        <taxon>Nematoda</taxon>
        <taxon>Chromadorea</taxon>
        <taxon>Rhabditida</taxon>
        <taxon>Rhabditina</taxon>
        <taxon>Rhabditomorpha</taxon>
        <taxon>Rhabditoidea</taxon>
        <taxon>Rhabditidae</taxon>
        <taxon>Peloderinae</taxon>
        <taxon>Caenorhabditis</taxon>
    </lineage>
</organism>
<accession>G8JYB2</accession>
<sequence>MAASSMSSLTSSYHTTAMPSSNSVVPPFDARNLEIKTKSIEQTLIPLVTQITTLVNYKESYMASGKPKSERAMRAALKIGSAVEAAIERFVCVGETIADENADIQPEMYDACTEARLAGASMANLSCACNDDPNSVVDKAVLVRASRQLLSSVTRVLLLADRVLVKQVLRAEDKIAFSLSRLESTRSFNDFVKVFAVFGGEMVELAHRSGDRQHDLKSEKRKAQMSIARTSLERLTMLLLTASKTYLRHPDCDSALQCRDGVFYQMKLSLELIAICVCDGILTTEKSRYIQDEPDMPIDIALQLTANAAIKQLTEMLEMIRMTVRVGAGVRERIVSALDALCQLTQDFTDSAYTPHHQREQILDFLEECRFEMTNLIQPDENEQLAASGLEVTVERLNRRLKDLSKQLQIVAMEQISEVLRANEDQVLLSSMKACAVSGDIDGVEKYMHKFREHADHMQEVCRLLHHISITDALHVHTGHVERNMRALAPLTILAGRTLCVHPSSRIARENLEVFCDTWGQAVNDLSRVAKESDVAANGRVAAEKQAYMSLPRPGKHGTTQKPSKPITLDVEDQQKMAKVGLEMKLLTSEVDAEAEKWDEYAENDIVKRAKAMSSMAYNMYLFTRGDGPLKTTHDLFTQAEFFAEQANQMYRTVREFSYEVPGSAEKSDLSAILERIPLHCQQLQVMVKSPTVGKTATFGKVDSVIQETKNLMNEIAKLVTASFVCATKYEIEFRGGSVNGRTGADGERTSRESTVWRRTPSIRRAAPPTSSHLSANNSSSIHI</sequence>
<proteinExistence type="evidence at protein level"/>
<reference evidence="8" key="1">
    <citation type="journal article" date="1998" name="Science">
        <title>Genome sequence of the nematode C. elegans: a platform for investigating biology.</title>
        <authorList>
            <consortium name="The C. elegans sequencing consortium"/>
        </authorList>
    </citation>
    <scope>NUCLEOTIDE SEQUENCE [LARGE SCALE GENOMIC DNA]</scope>
    <source>
        <strain evidence="8">Bristol N2</strain>
    </source>
</reference>
<reference evidence="7" key="2">
    <citation type="journal article" date="2010" name="EMBO J.">
        <title>alpha-Catulin CTN-1 is required for BK channel subcellular localization in C. elegans body-wall muscle cells.</title>
        <authorList>
            <person name="Chen B."/>
            <person name="Liu P."/>
            <person name="Wang S.J."/>
            <person name="Ge Q."/>
            <person name="Zhan H."/>
            <person name="Mohler W.A."/>
            <person name="Wang Z.W."/>
        </authorList>
    </citation>
    <scope>FUNCTION</scope>
    <scope>INTERACTION WITH SLO-1</scope>
    <scope>TISSUE SPECIFICITY</scope>
    <scope>MUTAGENESIS OF 358-ARG--ILE-784</scope>
</reference>
<reference evidence="7" key="3">
    <citation type="journal article" date="2010" name="PLoS Genet.">
        <title>An alpha-catulin homologue controls neuromuscular function through localization of the dystrophin complex and BK channels in Caenorhabditis elegans.</title>
        <authorList>
            <person name="Abraham L.S."/>
            <person name="Oh H.J."/>
            <person name="Sancar F."/>
            <person name="Richmond J.E."/>
            <person name="Kim H."/>
        </authorList>
    </citation>
    <scope>FUNCTION</scope>
    <scope>INTERACTION WITH SLO-1</scope>
    <scope>TISSUE SPECIFICITY</scope>
    <scope>MUTAGENESIS OF 144-ARG--ILE-784 AND 521-GLN--ILE-784</scope>
</reference>
<reference evidence="7" key="4">
    <citation type="journal article" date="2012" name="J. Biol. Chem.">
        <title>Interaction of alpha-catulin with dystrobrevin contributes to integrity of dystrophin complex in muscle.</title>
        <authorList>
            <person name="Oh H.J."/>
            <person name="Abraham L.S."/>
            <person name="van Hengel J."/>
            <person name="Stove C."/>
            <person name="Proszynski T.J."/>
            <person name="Gevaert K."/>
            <person name="DiMario J.X."/>
            <person name="Sanes J.R."/>
            <person name="van Roy F."/>
            <person name="Kim H."/>
        </authorList>
    </citation>
    <scope>FUNCTION</scope>
    <scope>INTERACTION WITH DYB-1</scope>
    <scope>TISSUE SPECIFICITY</scope>
    <scope>DOMAIN</scope>
    <scope>MUTAGENESIS OF 382-ASN--ILE-416</scope>
</reference>
<reference evidence="7" key="5">
    <citation type="journal article" date="2019" name="Sci. Rep.">
        <title>BK channel clustering is required for normal behavioral alcohol sensitivity in C. elegans.</title>
        <authorList>
            <person name="Oh K.H."/>
            <person name="Kim H."/>
        </authorList>
    </citation>
    <scope>FUNCTION</scope>
    <scope>MUTAGENESIS OF 144-ARG--ILE-784</scope>
</reference>
<feature type="chain" id="PRO_0000462103" description="Alpha-catulin">
    <location>
        <begin position="1"/>
        <end position="784"/>
    </location>
</feature>
<feature type="region of interest" description="Vinculin/alpha-catenin homology 1 (VH1) region" evidence="4 5">
    <location>
        <begin position="35"/>
        <end position="247"/>
    </location>
</feature>
<feature type="region of interest" description="Vinculin/alpha-catenin homology 2 (VH2) region" evidence="4 5">
    <location>
        <begin position="552"/>
        <end position="696"/>
    </location>
</feature>
<feature type="region of interest" description="Disordered" evidence="2">
    <location>
        <begin position="737"/>
        <end position="784"/>
    </location>
</feature>
<feature type="coiled-coil region" evidence="1">
    <location>
        <begin position="387"/>
        <end position="414"/>
    </location>
</feature>
<feature type="compositionally biased region" description="Basic and acidic residues" evidence="2">
    <location>
        <begin position="745"/>
        <end position="756"/>
    </location>
</feature>
<feature type="compositionally biased region" description="Low complexity" evidence="2">
    <location>
        <begin position="771"/>
        <end position="784"/>
    </location>
</feature>
<feature type="mutagenesis site" description="In eg1167; disrupts the localization and clustering of slo-1, causing it to form dispersed and diffused puncta. Sensitive to ethanol-induced suppression of locomotory and egg-laying behaviors. Exhibits increased head-bending compared to wild-type. Suppresses both egg-laying and locomotory defects in slo-1(gf) background mutant. Increases evoked synaptic responses at neuromuscular junctions. Abolishes dyb-1 punctate pattern at the muscle membrane." evidence="4 5 6">
    <location>
        <begin position="144"/>
        <end position="784"/>
    </location>
</feature>
<feature type="mutagenesis site" description="In zw1; partially suppresses the inhibitory effect of slo-1(gf) on locomotion. Exhibits increased head-bending compared to wild-type. Leads to mislocalization and disruption of slo-1 puncta in body wall muscle cells." evidence="3">
    <location>
        <begin position="358"/>
        <end position="784"/>
    </location>
</feature>
<feature type="mutagenesis site" description="Exhibits a punctate pattern in the muscle similar to the wild-type." evidence="5">
    <location>
        <begin position="382"/>
        <end position="416"/>
    </location>
</feature>
<feature type="mutagenesis site" description="In cim6; exhibits increased head-bending compared to wild-type. Suppresses egg-laying but not locomotory defects in slo-1(gf) background mutant." evidence="4">
    <location>
        <begin position="521"/>
        <end position="784"/>
    </location>
</feature>
<keyword id="KW-0175">Coiled coil</keyword>
<keyword id="KW-0963">Cytoplasm</keyword>
<keyword id="KW-1185">Reference proteome</keyword>
<comment type="function">
    <text evidence="3 4 5 6">Required for slo-1 potassium ion channel clustering at presynaptic terminals and in egg-laying muscles; clustering of slo-1 mediates the intoxicating and sedatory effects of ethanol on worms (PubMed:31308408). Required for slo-1 localization to dense bodies in body wall muscle cells (PubMed:20700105). Maintains the localization of the dystrophin complex near muscle cell dense bodies via its interaction with complex member dyb-1 which is required for slo-1 localization in muscle while slo-1 localization in neurons is independent of the dystrophin complex (PubMed:20865173, PubMed:22577143).</text>
</comment>
<comment type="subunit">
    <text evidence="3 4 5">Interacts with slo-1 (via C-terminus); the interaction is required for localization of slo-1 to dense bodies in body wall muscle cells (PubMed:20700105, PubMed:20865173). Interacts (via N-terminus) with dystrophin complex member dyb-1 (via C-terminus); the interaction is required for localization of the dystrophin complex and ctn-1 near dense bodies in muscle cells (PubMed:22577143).</text>
</comment>
<comment type="subcellular location">
    <subcellularLocation>
        <location evidence="4">Cytoplasm</location>
    </subcellularLocation>
    <text evidence="4">Localizes near dense bodies in muscle cells.</text>
</comment>
<comment type="tissue specificity">
    <text evidence="3 4">Expressed in body wall muscles, vulval muscles, stomatointestinal cells and pharyngeal muscle cells (PubMed:20700105, PubMed:20865173). Expressed in enteric muscles, nerve ring neurons and in the ventral nerve cord (PubMed:20865173).</text>
</comment>
<comment type="domain">
    <text evidence="5">The vinculin/alpha-catenin homology 1 (VH1) region plays a critical role in interacting with dyb-1 and mediates the localization of ctn-1 near dense bodies.</text>
</comment>
<comment type="domain">
    <text evidence="5">The vinculin/alpha-catenin homology 2 (VH2) region may play a role in the precise localization of ctn-1 near dense bodies.</text>
</comment>
<comment type="similarity">
    <text evidence="7">Belongs to the vinculin/alpha-catenin family.</text>
</comment>
<dbReference type="EMBL" id="BX284601">
    <property type="protein sequence ID" value="CCD70918.2"/>
    <property type="molecule type" value="Genomic_DNA"/>
</dbReference>
<dbReference type="RefSeq" id="NP_001379944.1">
    <property type="nucleotide sequence ID" value="NM_001393087.1"/>
</dbReference>
<dbReference type="RefSeq" id="NP_740813.2">
    <property type="nucleotide sequence ID" value="NM_170829.4"/>
</dbReference>
<dbReference type="SMR" id="G8JYB2"/>
<dbReference type="IntAct" id="G8JYB2">
    <property type="interactions" value="1"/>
</dbReference>
<dbReference type="PeptideAtlas" id="G8JYB2"/>
<dbReference type="EnsemblMetazoa" id="Y23H5A.5d.1">
    <property type="protein sequence ID" value="Y23H5A.5d.1"/>
    <property type="gene ID" value="WBGene00000832"/>
</dbReference>
<dbReference type="EnsemblMetazoa" id="Y23H5A.5d.2">
    <property type="protein sequence ID" value="Y23H5A.5d.2"/>
    <property type="gene ID" value="WBGene00000832"/>
</dbReference>
<dbReference type="EnsemblMetazoa" id="Y23H5A.5d.3">
    <property type="protein sequence ID" value="Y23H5A.5d.3"/>
    <property type="gene ID" value="WBGene00000832"/>
</dbReference>
<dbReference type="GeneID" id="171818"/>
<dbReference type="AGR" id="WB:WBGene00000832"/>
<dbReference type="WormBase" id="Y23H5A.5d">
    <property type="protein sequence ID" value="CE46567"/>
    <property type="gene ID" value="WBGene00000832"/>
    <property type="gene designation" value="ctn-1"/>
</dbReference>
<dbReference type="HOGENOM" id="CLU_015314_4_0_1"/>
<dbReference type="OrthoDB" id="2875237at2759"/>
<dbReference type="Proteomes" id="UP000001940">
    <property type="component" value="Chromosome I"/>
</dbReference>
<dbReference type="Bgee" id="WBGene00000832">
    <property type="expression patterns" value="Expressed in pharyngeal muscle cell (C elegans) and 3 other cell types or tissues"/>
</dbReference>
<dbReference type="ExpressionAtlas" id="G8JYB2">
    <property type="expression patterns" value="baseline and differential"/>
</dbReference>
<dbReference type="GO" id="GO:0005886">
    <property type="term" value="C:plasma membrane"/>
    <property type="evidence" value="ECO:0000314"/>
    <property type="project" value="WormBase"/>
</dbReference>
<dbReference type="GO" id="GO:0055120">
    <property type="term" value="C:striated muscle dense body"/>
    <property type="evidence" value="ECO:0000314"/>
    <property type="project" value="WormBase"/>
</dbReference>
<dbReference type="GO" id="GO:0051015">
    <property type="term" value="F:actin filament binding"/>
    <property type="evidence" value="ECO:0007669"/>
    <property type="project" value="InterPro"/>
</dbReference>
<dbReference type="GO" id="GO:0045296">
    <property type="term" value="F:cadherin binding"/>
    <property type="evidence" value="ECO:0007669"/>
    <property type="project" value="InterPro"/>
</dbReference>
<dbReference type="GO" id="GO:0007155">
    <property type="term" value="P:cell adhesion"/>
    <property type="evidence" value="ECO:0007669"/>
    <property type="project" value="InterPro"/>
</dbReference>
<dbReference type="GO" id="GO:0040012">
    <property type="term" value="P:regulation of locomotion"/>
    <property type="evidence" value="ECO:0000315"/>
    <property type="project" value="WormBase"/>
</dbReference>
<dbReference type="GO" id="GO:0007266">
    <property type="term" value="P:Rho protein signal transduction"/>
    <property type="evidence" value="ECO:0000318"/>
    <property type="project" value="GO_Central"/>
</dbReference>
<dbReference type="FunFam" id="1.20.120.230:FF:000028">
    <property type="entry name" value="Alpha-CaTuliN (Catenin/vinculin related)"/>
    <property type="match status" value="1"/>
</dbReference>
<dbReference type="FunFam" id="1.20.120.230:FF:000032">
    <property type="entry name" value="Alpha-CaTuliN (Catenin/vinculin related)"/>
    <property type="match status" value="1"/>
</dbReference>
<dbReference type="FunFam" id="1.20.120.230:FF:000017">
    <property type="entry name" value="Catenin alpha like 1"/>
    <property type="match status" value="1"/>
</dbReference>
<dbReference type="Gene3D" id="1.20.120.230">
    <property type="entry name" value="Alpha-catenin/vinculin-like"/>
    <property type="match status" value="4"/>
</dbReference>
<dbReference type="InterPro" id="IPR036723">
    <property type="entry name" value="Alpha-catenin/vinculin-like_sf"/>
</dbReference>
<dbReference type="InterPro" id="IPR001033">
    <property type="entry name" value="Alpha_catenin"/>
</dbReference>
<dbReference type="InterPro" id="IPR030045">
    <property type="entry name" value="CTNNAL1"/>
</dbReference>
<dbReference type="InterPro" id="IPR006077">
    <property type="entry name" value="Vinculin/catenin"/>
</dbReference>
<dbReference type="PANTHER" id="PTHR46342">
    <property type="entry name" value="ALPHA-CATULIN"/>
    <property type="match status" value="1"/>
</dbReference>
<dbReference type="PANTHER" id="PTHR46342:SF1">
    <property type="entry name" value="ALPHA-CATULIN"/>
    <property type="match status" value="1"/>
</dbReference>
<dbReference type="Pfam" id="PF01044">
    <property type="entry name" value="Vinculin"/>
    <property type="match status" value="2"/>
</dbReference>
<dbReference type="PRINTS" id="PR00805">
    <property type="entry name" value="ALPHACATENIN"/>
</dbReference>
<dbReference type="SUPFAM" id="SSF47220">
    <property type="entry name" value="alpha-catenin/vinculin-like"/>
    <property type="match status" value="3"/>
</dbReference>
<gene>
    <name evidence="9" type="primary">ctn-1</name>
    <name evidence="9" type="ORF">Y23H5A.5</name>
</gene>